<feature type="chain" id="PRO_0000414826" description="23S rRNA (uracil(747)-C(5))-methyltransferase RlmC">
    <location>
        <begin position="1"/>
        <end position="375"/>
    </location>
</feature>
<feature type="active site" description="Nucleophile" evidence="1">
    <location>
        <position position="334"/>
    </location>
</feature>
<feature type="binding site" evidence="1">
    <location>
        <position position="3"/>
    </location>
    <ligand>
        <name>[4Fe-4S] cluster</name>
        <dbReference type="ChEBI" id="CHEBI:49883"/>
    </ligand>
</feature>
<feature type="binding site" evidence="1">
    <location>
        <position position="11"/>
    </location>
    <ligand>
        <name>[4Fe-4S] cluster</name>
        <dbReference type="ChEBI" id="CHEBI:49883"/>
    </ligand>
</feature>
<feature type="binding site" evidence="1">
    <location>
        <position position="14"/>
    </location>
    <ligand>
        <name>[4Fe-4S] cluster</name>
        <dbReference type="ChEBI" id="CHEBI:49883"/>
    </ligand>
</feature>
<feature type="binding site" evidence="1">
    <location>
        <position position="87"/>
    </location>
    <ligand>
        <name>[4Fe-4S] cluster</name>
        <dbReference type="ChEBI" id="CHEBI:49883"/>
    </ligand>
</feature>
<feature type="binding site" evidence="1">
    <location>
        <position position="212"/>
    </location>
    <ligand>
        <name>S-adenosyl-L-methionine</name>
        <dbReference type="ChEBI" id="CHEBI:59789"/>
    </ligand>
</feature>
<feature type="binding site" evidence="1">
    <location>
        <position position="241"/>
    </location>
    <ligand>
        <name>S-adenosyl-L-methionine</name>
        <dbReference type="ChEBI" id="CHEBI:59789"/>
    </ligand>
</feature>
<feature type="binding site" evidence="1">
    <location>
        <position position="262"/>
    </location>
    <ligand>
        <name>S-adenosyl-L-methionine</name>
        <dbReference type="ChEBI" id="CHEBI:59789"/>
    </ligand>
</feature>
<feature type="binding site" evidence="1">
    <location>
        <position position="307"/>
    </location>
    <ligand>
        <name>S-adenosyl-L-methionine</name>
        <dbReference type="ChEBI" id="CHEBI:59789"/>
    </ligand>
</feature>
<comment type="function">
    <text evidence="1">Catalyzes the formation of 5-methyl-uridine at position 747 (m5U747) in 23S rRNA.</text>
</comment>
<comment type="catalytic activity">
    <reaction evidence="1">
        <text>uridine(747) in 23S rRNA + S-adenosyl-L-methionine = 5-methyluridine(747) in 23S rRNA + S-adenosyl-L-homocysteine + H(+)</text>
        <dbReference type="Rhea" id="RHEA:42628"/>
        <dbReference type="Rhea" id="RHEA-COMP:10154"/>
        <dbReference type="Rhea" id="RHEA-COMP:10155"/>
        <dbReference type="ChEBI" id="CHEBI:15378"/>
        <dbReference type="ChEBI" id="CHEBI:57856"/>
        <dbReference type="ChEBI" id="CHEBI:59789"/>
        <dbReference type="ChEBI" id="CHEBI:65315"/>
        <dbReference type="ChEBI" id="CHEBI:74447"/>
        <dbReference type="EC" id="2.1.1.189"/>
    </reaction>
</comment>
<comment type="similarity">
    <text evidence="1">Belongs to the class I-like SAM-binding methyltransferase superfamily. RNA M5U methyltransferase family. RlmC subfamily.</text>
</comment>
<accession>D3VBF7</accession>
<sequence length="375" mass="42662">MQCVQYTAGHCHSCQWLDKSYSHQLSDKQKHLKQLLQETSVTHWLSPVMSKTSGFRNKAKMVVNGSVERPLLGMLHRDGRTVDLCDCPLYPQHFQAVFEVIKVFIAKAGLVPYNVERRKGELKYILLTESRANNEMMLRFVLRSETKLAQLERVLPWLQEQLPQLTVISANIQPTHMAILEGEKEIIFTGQTMLKETFNGIPLYIRPRSFFQTNPDIASELYATAGRWVRELNISSMWDLFCGAGGFGLHCADKETKLTGIEISAEAIDCAKSSAKSLGLKSVEFQALDSTHFALEKAKIPELVLVNPPRRGIGKELCEYLSRMAPKFVLYSSCNAETMAKDIAMLKQYRIEKVQLFDMFPHTEHYETLALLILD</sequence>
<gene>
    <name evidence="1" type="primary">rlmC</name>
    <name type="ordered locus">XNC1_1533</name>
</gene>
<protein>
    <recommendedName>
        <fullName evidence="1">23S rRNA (uracil(747)-C(5))-methyltransferase RlmC</fullName>
        <ecNumber evidence="1">2.1.1.189</ecNumber>
    </recommendedName>
    <alternativeName>
        <fullName evidence="1">23S rRNA(m5U747)-methyltransferase</fullName>
    </alternativeName>
</protein>
<organism>
    <name type="scientific">Xenorhabdus nematophila (strain ATCC 19061 / DSM 3370 / CCUG 14189 / LMG 1036 / NCIMB 9965 / AN6)</name>
    <dbReference type="NCBI Taxonomy" id="406817"/>
    <lineage>
        <taxon>Bacteria</taxon>
        <taxon>Pseudomonadati</taxon>
        <taxon>Pseudomonadota</taxon>
        <taxon>Gammaproteobacteria</taxon>
        <taxon>Enterobacterales</taxon>
        <taxon>Morganellaceae</taxon>
        <taxon>Xenorhabdus</taxon>
    </lineage>
</organism>
<reference key="1">
    <citation type="journal article" date="2011" name="PLoS ONE">
        <title>The entomopathogenic bacterial endosymbionts xenorhabdus and photorhabdus: convergent lifestyles from divergent genomes.</title>
        <authorList>
            <person name="Chaston J.M."/>
            <person name="Suen G."/>
            <person name="Tucker S.L."/>
            <person name="Andersen A.W."/>
            <person name="Bhasin A."/>
            <person name="Bode E."/>
            <person name="Bode H.B."/>
            <person name="Brachmann A.O."/>
            <person name="Cowles C.E."/>
            <person name="Cowles K.N."/>
            <person name="Darby C."/>
            <person name="de Leon L."/>
            <person name="Drace K."/>
            <person name="Du Z."/>
            <person name="Givaudan A."/>
            <person name="Herbert Tran E.E."/>
            <person name="Jewell K.A."/>
            <person name="Knack J.J."/>
            <person name="Krasomil-Osterfeld K.C."/>
            <person name="Kukor R."/>
            <person name="Lanois A."/>
            <person name="Latreille P."/>
            <person name="Leimgruber N.K."/>
            <person name="Lipke C.M."/>
            <person name="Liu R."/>
            <person name="Lu X."/>
            <person name="Martens E.C."/>
            <person name="Marri P.R."/>
            <person name="Medigue C."/>
            <person name="Menard M.L."/>
            <person name="Miller N.M."/>
            <person name="Morales-Soto N."/>
            <person name="Norton S."/>
            <person name="Ogier J.C."/>
            <person name="Orchard S.S."/>
            <person name="Park D."/>
            <person name="Park Y."/>
            <person name="Qurollo B.A."/>
            <person name="Sugar D.R."/>
            <person name="Richards G.R."/>
            <person name="Rouy Z."/>
            <person name="Slominski B."/>
            <person name="Slominski K."/>
            <person name="Snyder H."/>
            <person name="Tjaden B.C."/>
            <person name="van der Hoeven R."/>
            <person name="Welch R.D."/>
            <person name="Wheeler C."/>
            <person name="Xiang B."/>
            <person name="Barbazuk B."/>
            <person name="Gaudriault S."/>
            <person name="Goodner B."/>
            <person name="Slater S.C."/>
            <person name="Forst S."/>
            <person name="Goldman B.S."/>
            <person name="Goodrich-Blair H."/>
        </authorList>
    </citation>
    <scope>NUCLEOTIDE SEQUENCE [LARGE SCALE GENOMIC DNA]</scope>
    <source>
        <strain>ATCC 19061 / DSM 3370 / CCUG 14189 / LMG 1036 / NCIMB 9965 / AN6</strain>
    </source>
</reference>
<name>RLMC_XENNA</name>
<keyword id="KW-0004">4Fe-4S</keyword>
<keyword id="KW-0408">Iron</keyword>
<keyword id="KW-0411">Iron-sulfur</keyword>
<keyword id="KW-0479">Metal-binding</keyword>
<keyword id="KW-0489">Methyltransferase</keyword>
<keyword id="KW-1185">Reference proteome</keyword>
<keyword id="KW-0698">rRNA processing</keyword>
<keyword id="KW-0949">S-adenosyl-L-methionine</keyword>
<keyword id="KW-0808">Transferase</keyword>
<evidence type="ECO:0000255" key="1">
    <source>
        <dbReference type="HAMAP-Rule" id="MF_01012"/>
    </source>
</evidence>
<proteinExistence type="inferred from homology"/>
<dbReference type="EC" id="2.1.1.189" evidence="1"/>
<dbReference type="EMBL" id="FN667742">
    <property type="protein sequence ID" value="CBJ89596.1"/>
    <property type="molecule type" value="Genomic_DNA"/>
</dbReference>
<dbReference type="RefSeq" id="WP_013183906.1">
    <property type="nucleotide sequence ID" value="NC_014228.1"/>
</dbReference>
<dbReference type="SMR" id="D3VBF7"/>
<dbReference type="STRING" id="406817.XNC1_1533"/>
<dbReference type="GeneID" id="24902197"/>
<dbReference type="KEGG" id="xne:XNC1_1533"/>
<dbReference type="eggNOG" id="COG2265">
    <property type="taxonomic scope" value="Bacteria"/>
</dbReference>
<dbReference type="HOGENOM" id="CLU_014689_0_0_6"/>
<dbReference type="Proteomes" id="UP000008075">
    <property type="component" value="Chromosome"/>
</dbReference>
<dbReference type="GO" id="GO:0051539">
    <property type="term" value="F:4 iron, 4 sulfur cluster binding"/>
    <property type="evidence" value="ECO:0007669"/>
    <property type="project" value="UniProtKB-KW"/>
</dbReference>
<dbReference type="GO" id="GO:0005506">
    <property type="term" value="F:iron ion binding"/>
    <property type="evidence" value="ECO:0007669"/>
    <property type="project" value="UniProtKB-UniRule"/>
</dbReference>
<dbReference type="GO" id="GO:0070041">
    <property type="term" value="F:rRNA (uridine-C5-)-methyltransferase activity"/>
    <property type="evidence" value="ECO:0007669"/>
    <property type="project" value="UniProtKB-UniRule"/>
</dbReference>
<dbReference type="GO" id="GO:0070475">
    <property type="term" value="P:rRNA base methylation"/>
    <property type="evidence" value="ECO:0007669"/>
    <property type="project" value="TreeGrafter"/>
</dbReference>
<dbReference type="CDD" id="cd02440">
    <property type="entry name" value="AdoMet_MTases"/>
    <property type="match status" value="1"/>
</dbReference>
<dbReference type="FunFam" id="2.40.50.1070:FF:000002">
    <property type="entry name" value="23S rRNA (uracil(747)-C(5))-methyltransferase RlmC"/>
    <property type="match status" value="1"/>
</dbReference>
<dbReference type="Gene3D" id="2.40.50.1070">
    <property type="match status" value="1"/>
</dbReference>
<dbReference type="Gene3D" id="3.40.50.150">
    <property type="entry name" value="Vaccinia Virus protein VP39"/>
    <property type="match status" value="1"/>
</dbReference>
<dbReference type="HAMAP" id="MF_01012">
    <property type="entry name" value="23SrRNA_methyltr_RlmC"/>
    <property type="match status" value="1"/>
</dbReference>
<dbReference type="InterPro" id="IPR011825">
    <property type="entry name" value="23SrRNA_MeTrfase_RlmC"/>
</dbReference>
<dbReference type="InterPro" id="IPR030390">
    <property type="entry name" value="MeTrfase_TrmA_AS"/>
</dbReference>
<dbReference type="InterPro" id="IPR030391">
    <property type="entry name" value="MeTrfase_TrmA_CS"/>
</dbReference>
<dbReference type="InterPro" id="IPR029063">
    <property type="entry name" value="SAM-dependent_MTases_sf"/>
</dbReference>
<dbReference type="InterPro" id="IPR010280">
    <property type="entry name" value="U5_MeTrfase_fam"/>
</dbReference>
<dbReference type="NCBIfam" id="TIGR02085">
    <property type="entry name" value="meth_trns_rumB"/>
    <property type="match status" value="1"/>
</dbReference>
<dbReference type="NCBIfam" id="TIGR00479">
    <property type="entry name" value="rumA"/>
    <property type="match status" value="1"/>
</dbReference>
<dbReference type="PANTHER" id="PTHR11061">
    <property type="entry name" value="RNA M5U METHYLTRANSFERASE"/>
    <property type="match status" value="1"/>
</dbReference>
<dbReference type="PANTHER" id="PTHR11061:SF30">
    <property type="entry name" value="TRNA (URACIL(54)-C(5))-METHYLTRANSFERASE"/>
    <property type="match status" value="1"/>
</dbReference>
<dbReference type="Pfam" id="PF05958">
    <property type="entry name" value="tRNA_U5-meth_tr"/>
    <property type="match status" value="1"/>
</dbReference>
<dbReference type="SUPFAM" id="SSF53335">
    <property type="entry name" value="S-adenosyl-L-methionine-dependent methyltransferases"/>
    <property type="match status" value="1"/>
</dbReference>
<dbReference type="PROSITE" id="PS51687">
    <property type="entry name" value="SAM_MT_RNA_M5U"/>
    <property type="match status" value="1"/>
</dbReference>
<dbReference type="PROSITE" id="PS01230">
    <property type="entry name" value="TRMA_1"/>
    <property type="match status" value="1"/>
</dbReference>
<dbReference type="PROSITE" id="PS01231">
    <property type="entry name" value="TRMA_2"/>
    <property type="match status" value="1"/>
</dbReference>